<proteinExistence type="evidence at transcript level"/>
<feature type="signal peptide" evidence="2">
    <location>
        <begin position="1"/>
        <end position="25"/>
    </location>
</feature>
<feature type="propeptide" id="PRO_0000353083" evidence="1">
    <location>
        <begin position="26"/>
        <end position="77"/>
    </location>
</feature>
<feature type="peptide" id="PRO_0000353084" description="Calcitonin receptor-stimulating peptide 2">
    <location>
        <begin position="80"/>
        <end position="125"/>
    </location>
</feature>
<feature type="disulfide bond" evidence="1">
    <location>
        <begin position="81"/>
        <end position="86"/>
    </location>
</feature>
<comment type="subcellular location">
    <subcellularLocation>
        <location evidence="1">Secreted</location>
    </subcellularLocation>
</comment>
<comment type="similarity">
    <text evidence="3">Belongs to the calcitonin family.</text>
</comment>
<evidence type="ECO:0000250" key="1"/>
<evidence type="ECO:0000255" key="2"/>
<evidence type="ECO:0000305" key="3"/>
<gene>
    <name type="primary">CRSP2</name>
</gene>
<name>CRSP2_CAPHI</name>
<protein>
    <recommendedName>
        <fullName>Calcitonin receptor-stimulating peptide 2</fullName>
        <shortName>CRSP-2</shortName>
    </recommendedName>
</protein>
<accession>B3IWF8</accession>
<organism>
    <name type="scientific">Capra hircus</name>
    <name type="common">Goat</name>
    <dbReference type="NCBI Taxonomy" id="9925"/>
    <lineage>
        <taxon>Eukaryota</taxon>
        <taxon>Metazoa</taxon>
        <taxon>Chordata</taxon>
        <taxon>Craniata</taxon>
        <taxon>Vertebrata</taxon>
        <taxon>Euteleostomi</taxon>
        <taxon>Mammalia</taxon>
        <taxon>Eutheria</taxon>
        <taxon>Laurasiatheria</taxon>
        <taxon>Artiodactyla</taxon>
        <taxon>Ruminantia</taxon>
        <taxon>Pecora</taxon>
        <taxon>Bovidae</taxon>
        <taxon>Caprinae</taxon>
        <taxon>Capra</taxon>
    </lineage>
</organism>
<keyword id="KW-0165">Cleavage on pair of basic residues</keyword>
<keyword id="KW-1015">Disulfide bond</keyword>
<keyword id="KW-0675">Receptor</keyword>
<keyword id="KW-1185">Reference proteome</keyword>
<keyword id="KW-0964">Secreted</keyword>
<keyword id="KW-0732">Signal</keyword>
<dbReference type="EMBL" id="AB364647">
    <property type="protein sequence ID" value="BAG50396.1"/>
    <property type="status" value="ALT_SEQ"/>
    <property type="molecule type" value="mRNA"/>
</dbReference>
<dbReference type="RefSeq" id="NP_001272616.1">
    <property type="nucleotide sequence ID" value="NM_001285687.1"/>
</dbReference>
<dbReference type="STRING" id="9925.ENSCHIP00000033258"/>
<dbReference type="GeneID" id="100860822"/>
<dbReference type="KEGG" id="chx:100860822"/>
<dbReference type="CTD" id="403414"/>
<dbReference type="OrthoDB" id="9929923at2759"/>
<dbReference type="Proteomes" id="UP000291000">
    <property type="component" value="Unassembled WGS sequence"/>
</dbReference>
<dbReference type="Proteomes" id="UP000694566">
    <property type="component" value="Unplaced"/>
</dbReference>
<dbReference type="GO" id="GO:0005615">
    <property type="term" value="C:extracellular space"/>
    <property type="evidence" value="ECO:0007669"/>
    <property type="project" value="TreeGrafter"/>
</dbReference>
<dbReference type="GO" id="GO:0031716">
    <property type="term" value="F:calcitonin receptor binding"/>
    <property type="evidence" value="ECO:0007669"/>
    <property type="project" value="TreeGrafter"/>
</dbReference>
<dbReference type="GO" id="GO:0005179">
    <property type="term" value="F:hormone activity"/>
    <property type="evidence" value="ECO:0007669"/>
    <property type="project" value="InterPro"/>
</dbReference>
<dbReference type="GO" id="GO:0007189">
    <property type="term" value="P:adenylate cyclase-activating G protein-coupled receptor signaling pathway"/>
    <property type="evidence" value="ECO:0007669"/>
    <property type="project" value="TreeGrafter"/>
</dbReference>
<dbReference type="GO" id="GO:0051480">
    <property type="term" value="P:regulation of cytosolic calcium ion concentration"/>
    <property type="evidence" value="ECO:0007669"/>
    <property type="project" value="TreeGrafter"/>
</dbReference>
<dbReference type="Gene3D" id="6.10.250.2190">
    <property type="match status" value="1"/>
</dbReference>
<dbReference type="InterPro" id="IPR021117">
    <property type="entry name" value="Calcitonin-like"/>
</dbReference>
<dbReference type="InterPro" id="IPR021116">
    <property type="entry name" value="Calcitonin/adrenomedullin"/>
</dbReference>
<dbReference type="InterPro" id="IPR015476">
    <property type="entry name" value="Calcitonin_gene-rel_peptide"/>
</dbReference>
<dbReference type="InterPro" id="IPR001693">
    <property type="entry name" value="Calcitonin_peptide-like"/>
</dbReference>
<dbReference type="PANTHER" id="PTHR10505:SF3">
    <property type="entry name" value="CALCITONIN GENE-RELATED PEPTIDE 2"/>
    <property type="match status" value="1"/>
</dbReference>
<dbReference type="PANTHER" id="PTHR10505">
    <property type="entry name" value="CALCITONIN-RELATED"/>
    <property type="match status" value="1"/>
</dbReference>
<dbReference type="Pfam" id="PF00214">
    <property type="entry name" value="Calc_CGRP_IAPP"/>
    <property type="match status" value="1"/>
</dbReference>
<dbReference type="PRINTS" id="PR00817">
    <property type="entry name" value="CALCITONINB"/>
</dbReference>
<dbReference type="SMART" id="SM00113">
    <property type="entry name" value="CALCITONIN"/>
    <property type="match status" value="1"/>
</dbReference>
<reference key="1">
    <citation type="submission" date="2007-10" db="EMBL/GenBank/DDBJ databases">
        <title>Identification and biological activity of ovine and caprine calcitonin receptor-Sti.</title>
        <authorList>
            <person name="Charles C.J."/>
            <person name="Katafuchi T."/>
            <person name="Yandle T.G."/>
            <person name="Minamino N."/>
        </authorList>
    </citation>
    <scope>NUCLEOTIDE SEQUENCE [MRNA]</scope>
</reference>
<sequence>MGFWKFLPFLVLSFLVVYQAGMFQAAPFRSALENDFDPAILTEKEMCLLLAAVMNDYVQMKTSELKQEAEHFHITAQKRSCNRATCVTHKMAGSLSRSGSEIKRNFMSTNVGSKAFGQRSRDLQK</sequence>